<dbReference type="EMBL" id="AP002051">
    <property type="protein sequence ID" value="BAB02618.1"/>
    <property type="molecule type" value="Genomic_DNA"/>
</dbReference>
<dbReference type="EMBL" id="CP002686">
    <property type="protein sequence ID" value="AEE77427.2"/>
    <property type="molecule type" value="Genomic_DNA"/>
</dbReference>
<dbReference type="RefSeq" id="NP_189468.2">
    <property type="nucleotide sequence ID" value="NM_113747.2"/>
</dbReference>
<dbReference type="SMR" id="Q9LHD8"/>
<dbReference type="FunCoup" id="Q9LHD8">
    <property type="interactions" value="116"/>
</dbReference>
<dbReference type="STRING" id="3702.Q9LHD8"/>
<dbReference type="PaxDb" id="3702-AT3G28280.1"/>
<dbReference type="EnsemblPlants" id="AT3G28280.1">
    <property type="protein sequence ID" value="AT3G28280.1"/>
    <property type="gene ID" value="AT3G28280"/>
</dbReference>
<dbReference type="GeneID" id="822454"/>
<dbReference type="Gramene" id="AT3G28280.1">
    <property type="protein sequence ID" value="AT3G28280.1"/>
    <property type="gene ID" value="AT3G28280"/>
</dbReference>
<dbReference type="KEGG" id="ath:AT3G28280"/>
<dbReference type="Araport" id="AT3G28280"/>
<dbReference type="TAIR" id="AT3G28280"/>
<dbReference type="HOGENOM" id="CLU_095121_0_0_1"/>
<dbReference type="InParanoid" id="Q9LHD8"/>
<dbReference type="OMA" id="HIMISLN"/>
<dbReference type="PRO" id="PR:Q9LHD8"/>
<dbReference type="Proteomes" id="UP000006548">
    <property type="component" value="Chromosome 3"/>
</dbReference>
<dbReference type="ExpressionAtlas" id="Q9LHD8">
    <property type="expression patterns" value="differential"/>
</dbReference>
<dbReference type="Gene3D" id="1.20.1280.50">
    <property type="match status" value="1"/>
</dbReference>
<dbReference type="InterPro" id="IPR056592">
    <property type="entry name" value="At3g26010-like_b-prop"/>
</dbReference>
<dbReference type="InterPro" id="IPR036047">
    <property type="entry name" value="F-box-like_dom_sf"/>
</dbReference>
<dbReference type="InterPro" id="IPR001810">
    <property type="entry name" value="F-box_dom"/>
</dbReference>
<dbReference type="InterPro" id="IPR050796">
    <property type="entry name" value="SCF_F-box_component"/>
</dbReference>
<dbReference type="PANTHER" id="PTHR31672">
    <property type="entry name" value="BNACNNG10540D PROTEIN"/>
    <property type="match status" value="1"/>
</dbReference>
<dbReference type="Pfam" id="PF24750">
    <property type="entry name" value="b-prop_At3g26010-like"/>
    <property type="match status" value="1"/>
</dbReference>
<dbReference type="Pfam" id="PF00646">
    <property type="entry name" value="F-box"/>
    <property type="match status" value="1"/>
</dbReference>
<dbReference type="SUPFAM" id="SSF81383">
    <property type="entry name" value="F-box domain"/>
    <property type="match status" value="1"/>
</dbReference>
<dbReference type="PROSITE" id="PS50181">
    <property type="entry name" value="FBOX"/>
    <property type="match status" value="1"/>
</dbReference>
<reference key="1">
    <citation type="journal article" date="2000" name="DNA Res.">
        <title>Structural analysis of Arabidopsis thaliana chromosome 3. II. Sequence features of the 4,251,695 bp regions covered by 90 P1, TAC and BAC clones.</title>
        <authorList>
            <person name="Kaneko T."/>
            <person name="Katoh T."/>
            <person name="Sato S."/>
            <person name="Nakamura Y."/>
            <person name="Asamizu E."/>
            <person name="Tabata S."/>
        </authorList>
    </citation>
    <scope>NUCLEOTIDE SEQUENCE [LARGE SCALE GENOMIC DNA]</scope>
    <source>
        <strain>cv. Columbia</strain>
    </source>
</reference>
<reference key="2">
    <citation type="journal article" date="2017" name="Plant J.">
        <title>Araport11: a complete reannotation of the Arabidopsis thaliana reference genome.</title>
        <authorList>
            <person name="Cheng C.Y."/>
            <person name="Krishnakumar V."/>
            <person name="Chan A.P."/>
            <person name="Thibaud-Nissen F."/>
            <person name="Schobel S."/>
            <person name="Town C.D."/>
        </authorList>
    </citation>
    <scope>GENOME REANNOTATION</scope>
    <source>
        <strain>cv. Columbia</strain>
    </source>
</reference>
<protein>
    <recommendedName>
        <fullName>Putative F-box protein At3g28280</fullName>
    </recommendedName>
</protein>
<keyword id="KW-1185">Reference proteome</keyword>
<sequence>MNSLPEDLLAMILVKLPIKIFTTFKIVCTQWESMVDSPYFRDLFLSIHQNSHYSSWSILSRCDEEVIAHYGCNTWGLQRSLHFYISSFLTKKFETQRNNYKVWSYSTDVGMILISENCICVKNRSLYVANPVSQECVEIPSHGYLKKVSCPLGIATRTENGVLLDYKVVLFNGSDTFRRLLIYSSQTGMWSINTVDLTVSGFHNQSPISLHGSIHWIASTSHSEDVAVSFDLYATGTSSVQCRVTTFPDFGKHPKFTRSFSTCQGSLMYMNIISITKVDGSLEIISARLYWFLKEKNGRKVLPQCQPTPLS</sequence>
<gene>
    <name type="ordered locus">At3g28280</name>
    <name type="ORF">MZF16.6</name>
</gene>
<evidence type="ECO:0000255" key="1">
    <source>
        <dbReference type="PROSITE-ProRule" id="PRU00080"/>
    </source>
</evidence>
<feature type="chain" id="PRO_0000283459" description="Putative F-box protein At3g28280">
    <location>
        <begin position="1"/>
        <end position="311"/>
    </location>
</feature>
<feature type="domain" description="F-box" evidence="1">
    <location>
        <begin position="1"/>
        <end position="43"/>
    </location>
</feature>
<accession>Q9LHD8</accession>
<accession>F4IZ17</accession>
<name>FB189_ARATH</name>
<organism>
    <name type="scientific">Arabidopsis thaliana</name>
    <name type="common">Mouse-ear cress</name>
    <dbReference type="NCBI Taxonomy" id="3702"/>
    <lineage>
        <taxon>Eukaryota</taxon>
        <taxon>Viridiplantae</taxon>
        <taxon>Streptophyta</taxon>
        <taxon>Embryophyta</taxon>
        <taxon>Tracheophyta</taxon>
        <taxon>Spermatophyta</taxon>
        <taxon>Magnoliopsida</taxon>
        <taxon>eudicotyledons</taxon>
        <taxon>Gunneridae</taxon>
        <taxon>Pentapetalae</taxon>
        <taxon>rosids</taxon>
        <taxon>malvids</taxon>
        <taxon>Brassicales</taxon>
        <taxon>Brassicaceae</taxon>
        <taxon>Camelineae</taxon>
        <taxon>Arabidopsis</taxon>
    </lineage>
</organism>
<proteinExistence type="predicted"/>